<gene>
    <name type="ordered locus">53</name>
</gene>
<reference evidence="4 5" key="1">
    <citation type="submission" date="2003-11" db="EMBL/GenBank/DDBJ databases">
        <authorList>
            <person name="Davis-Poynter N."/>
            <person name="Nugent J."/>
            <person name="Birch-Machin I."/>
            <person name="Allen G.P."/>
        </authorList>
    </citation>
    <scope>NUCLEOTIDE SEQUENCE [LARGE SCALE GENOMIC DNA]</scope>
</reference>
<keyword id="KW-0067">ATP-binding</keyword>
<keyword id="KW-0235">DNA replication</keyword>
<keyword id="KW-0238">DNA-binding</keyword>
<keyword id="KW-1048">Host nucleus</keyword>
<keyword id="KW-0547">Nucleotide-binding</keyword>
<evidence type="ECO:0000250" key="1"/>
<evidence type="ECO:0000255" key="2">
    <source>
        <dbReference type="PROSITE-ProRule" id="PRU00541"/>
    </source>
</evidence>
<evidence type="ECO:0000256" key="3">
    <source>
        <dbReference type="SAM" id="MobiDB-lite"/>
    </source>
</evidence>
<evidence type="ECO:0000305" key="4"/>
<evidence type="ECO:0000312" key="5">
    <source>
        <dbReference type="EMBL" id="AAS45937.1"/>
    </source>
</evidence>
<dbReference type="EMBL" id="AY464052">
    <property type="protein sequence ID" value="AAS45937.1"/>
    <property type="molecule type" value="Genomic_DNA"/>
</dbReference>
<dbReference type="KEGG" id="vg:2948557"/>
<dbReference type="Proteomes" id="UP000008296">
    <property type="component" value="Segment"/>
</dbReference>
<dbReference type="GO" id="GO:0042025">
    <property type="term" value="C:host cell nucleus"/>
    <property type="evidence" value="ECO:0007669"/>
    <property type="project" value="UniProtKB-SubCell"/>
</dbReference>
<dbReference type="GO" id="GO:0005524">
    <property type="term" value="F:ATP binding"/>
    <property type="evidence" value="ECO:0007669"/>
    <property type="project" value="UniProtKB-KW"/>
</dbReference>
<dbReference type="GO" id="GO:0003688">
    <property type="term" value="F:DNA replication origin binding"/>
    <property type="evidence" value="ECO:0007669"/>
    <property type="project" value="InterPro"/>
</dbReference>
<dbReference type="GO" id="GO:0006260">
    <property type="term" value="P:DNA replication"/>
    <property type="evidence" value="ECO:0007669"/>
    <property type="project" value="UniProtKB-KW"/>
</dbReference>
<dbReference type="Gene3D" id="3.40.50.300">
    <property type="entry name" value="P-loop containing nucleotide triphosphate hydrolases"/>
    <property type="match status" value="1"/>
</dbReference>
<dbReference type="InterPro" id="IPR014001">
    <property type="entry name" value="Helicase_ATP-bd"/>
</dbReference>
<dbReference type="InterPro" id="IPR027417">
    <property type="entry name" value="P-loop_NTPase"/>
</dbReference>
<dbReference type="InterPro" id="IPR003450">
    <property type="entry name" value="Replication_origin-bd"/>
</dbReference>
<dbReference type="Pfam" id="PF02399">
    <property type="entry name" value="Herpes_ori_bp"/>
    <property type="match status" value="1"/>
</dbReference>
<dbReference type="SMART" id="SM00487">
    <property type="entry name" value="DEXDc"/>
    <property type="match status" value="1"/>
</dbReference>
<dbReference type="SUPFAM" id="SSF52540">
    <property type="entry name" value="P-loop containing nucleoside triphosphate hydrolases"/>
    <property type="match status" value="1"/>
</dbReference>
<dbReference type="PROSITE" id="PS51192">
    <property type="entry name" value="HELICASE_ATP_BIND_1"/>
    <property type="match status" value="1"/>
</dbReference>
<name>OBP_EHV1V</name>
<organism>
    <name type="scientific">Equine herpesvirus 1 (strain V592)</name>
    <name type="common">EHV-1</name>
    <name type="synonym">Equine abortion virus</name>
    <dbReference type="NCBI Taxonomy" id="310273"/>
    <lineage>
        <taxon>Viruses</taxon>
        <taxon>Duplodnaviria</taxon>
        <taxon>Heunggongvirae</taxon>
        <taxon>Peploviricota</taxon>
        <taxon>Herviviricetes</taxon>
        <taxon>Herpesvirales</taxon>
        <taxon>Orthoherpesviridae</taxon>
        <taxon>Alphaherpesvirinae</taxon>
        <taxon>Varicellovirus</taxon>
        <taxon>Varicellovirus equidalpha1</taxon>
        <taxon>Equid alphaherpesvirus 1</taxon>
    </lineage>
</organism>
<feature type="chain" id="PRO_0000115869" description="Replication origin-binding protein">
    <location>
        <begin position="1"/>
        <end position="887"/>
    </location>
</feature>
<feature type="domain" description="Helicase ATP-binding" evidence="2">
    <location>
        <begin position="93"/>
        <end position="258"/>
    </location>
</feature>
<feature type="region of interest" description="Disordered" evidence="3">
    <location>
        <begin position="1"/>
        <end position="28"/>
    </location>
</feature>
<feature type="binding site" evidence="2">
    <location>
        <begin position="106"/>
        <end position="113"/>
    </location>
    <ligand>
        <name>ATP</name>
        <dbReference type="ChEBI" id="CHEBI:30616"/>
    </ligand>
</feature>
<proteinExistence type="inferred from homology"/>
<sequence length="887" mass="97276">MPSIGPIPTIPDEGSRGSSATAAPRRAMASYRDTTLGGRAEGVAFSAVEDSYTSSVSLARMLYGGDLEEWVRHTRPGVSLEIQSRAPVRFPPPNNPSSRRVTVVRAPMGSGKTTALLKWLGEALDAPDISALVVSCRRSFTRTLAKRFNDAELPGFATYFTSTDYTMAGEPFRRLLVQIESLHRVDDNLLNNYDILVLDEVMSTIGQLYSPTMVHLNKVDALLTRLLKTCPRVIAMDATANAQLVDFLASARGERSVHVIINSFAAPGFSQRDGTLLRTLGTDVLRAALGFVLVDDENGTKVMETDSRPISARLREVNSAGFFGRLMDRLVAGRNVCVFSSTVSFSEIVARFCSQFTDSILVLNSLRPSEDVAFWGGVRVLIYTTVVTVGLSFDTAHFHSMFAYVKPMSHGPDMVSVYQSLGRVRELIHNELLVYVDSSGARAEPIFTPMLLNHVVSRQGGWPAEFSQVTDALCCQFKARCGPAYRTASTRGLALFVRFKYKHFFERCTLASVGDSINILYTLLESNQMRVAIEGCQFPLTAAGFCDFLQDLRLDAYAARKEIKQLRGPGGIAATPTEVFENDDVAVFIQKYLRPGVAHDEILALLVELNSPIVREQFVNVAVLGACLRLPAALESPEVFAGVYKHYASGVVPVISDAGALESVSITPDVNVLARWDLYKSCTRHARDLAWDPSRGGSGLDMSEDFITNTLSADYNRFQSLLVEIAKCNVTPLEMLAAGAVRGVTTALSGRPKSRVPLSKGEHAVSLFKVLWEDVFGAKLAKSTQTFPGGVRVKNLRKDEIVALLESVNVNHSECKTHRELYALLMCNRKLFAGPRYKLRAPKWSRNLCFLELDNTGTCKTPLDAALADLAPSAWPQVYGAVDFDAL</sequence>
<accession>P84403</accession>
<accession>Q6S6V1</accession>
<comment type="function">
    <text evidence="1">Functions as a docking protein to recruit essential components of the viral replication machinery to viral DNA origins. In the presence of the major DNA-binding protein, opens dsDNA leading to a conformational change in the origin that facilitates DNA unwinding and subsequent replication (By similarity).</text>
</comment>
<comment type="subunit">
    <text evidence="1">Homodimer. Interacts with the major DNA-binding protein. Interacts with the DNA helicase/primase complex-associated protein and the polymerase accessory protein (By similarity).</text>
</comment>
<comment type="subcellular location">
    <subcellularLocation>
        <location evidence="4">Host nucleus</location>
    </subcellularLocation>
</comment>
<comment type="similarity">
    <text evidence="4">Belongs to the herpesviridae OriBP family.</text>
</comment>
<protein>
    <recommendedName>
        <fullName>Replication origin-binding protein</fullName>
        <shortName>OBP</shortName>
    </recommendedName>
    <alternativeName>
        <fullName>OriBP</fullName>
    </alternativeName>
</protein>
<organismHost>
    <name type="scientific">Equus caballus</name>
    <name type="common">Horse</name>
    <dbReference type="NCBI Taxonomy" id="9796"/>
</organismHost>